<comment type="function">
    <text evidence="2">Involved in the degradation of 3,6-anhydro-L-galactose, which is the major monomeric sugar of red macroalgae. Catalyzes the third step of the pathway, the NAD(+)-dependent oxidation of 2-dehydro-3-deoxy-L-galactonate (L-KDGal) to 3-deoxy-D-glycero-2,5-hexodiulosonate (L-DDGal).</text>
</comment>
<comment type="catalytic activity">
    <reaction evidence="2">
        <text>2-dehydro-3-deoxy-L-galactonate + NAD(+) = 3-deoxy-D-glycero-2,5-hexodiulosonate + NADH + H(+)</text>
        <dbReference type="Rhea" id="RHEA:47988"/>
        <dbReference type="ChEBI" id="CHEBI:15378"/>
        <dbReference type="ChEBI" id="CHEBI:29071"/>
        <dbReference type="ChEBI" id="CHEBI:57540"/>
        <dbReference type="ChEBI" id="CHEBI:57945"/>
        <dbReference type="ChEBI" id="CHEBI:75545"/>
        <dbReference type="EC" id="1.1.1.389"/>
    </reaction>
</comment>
<comment type="cofactor">
    <cofactor evidence="1">
        <name>Zn(2+)</name>
        <dbReference type="ChEBI" id="CHEBI:29105"/>
    </cofactor>
    <text evidence="1">Binds 2 Zn(2+) ions per subunit.</text>
</comment>
<comment type="similarity">
    <text evidence="4">Belongs to the zinc-containing alcohol dehydrogenase family.</text>
</comment>
<name>DDGAH_PSEA6</name>
<gene>
    <name evidence="5" type="ordered locus">Patl_2551</name>
</gene>
<dbReference type="EC" id="1.1.1.389" evidence="2"/>
<dbReference type="EMBL" id="CP000388">
    <property type="protein sequence ID" value="ABG41067.1"/>
    <property type="molecule type" value="Genomic_DNA"/>
</dbReference>
<dbReference type="RefSeq" id="WP_011575333.1">
    <property type="nucleotide sequence ID" value="NC_008228.1"/>
</dbReference>
<dbReference type="SMR" id="Q15SS1"/>
<dbReference type="STRING" id="342610.Patl_2551"/>
<dbReference type="DNASU" id="4174306"/>
<dbReference type="KEGG" id="pat:Patl_2551"/>
<dbReference type="eggNOG" id="COG1063">
    <property type="taxonomic scope" value="Bacteria"/>
</dbReference>
<dbReference type="HOGENOM" id="CLU_026673_11_0_6"/>
<dbReference type="OrthoDB" id="9773078at2"/>
<dbReference type="BioCyc" id="MetaCyc:MONOMER-19466"/>
<dbReference type="Proteomes" id="UP000001981">
    <property type="component" value="Chromosome"/>
</dbReference>
<dbReference type="GO" id="GO:0016616">
    <property type="term" value="F:oxidoreductase activity, acting on the CH-OH group of donors, NAD or NADP as acceptor"/>
    <property type="evidence" value="ECO:0007669"/>
    <property type="project" value="UniProtKB-ARBA"/>
</dbReference>
<dbReference type="GO" id="GO:0008270">
    <property type="term" value="F:zinc ion binding"/>
    <property type="evidence" value="ECO:0007669"/>
    <property type="project" value="InterPro"/>
</dbReference>
<dbReference type="Gene3D" id="3.90.180.10">
    <property type="entry name" value="Medium-chain alcohol dehydrogenases, catalytic domain"/>
    <property type="match status" value="1"/>
</dbReference>
<dbReference type="Gene3D" id="3.40.50.720">
    <property type="entry name" value="NAD(P)-binding Rossmann-like Domain"/>
    <property type="match status" value="1"/>
</dbReference>
<dbReference type="InterPro" id="IPR013149">
    <property type="entry name" value="ADH-like_C"/>
</dbReference>
<dbReference type="InterPro" id="IPR013154">
    <property type="entry name" value="ADH-like_N"/>
</dbReference>
<dbReference type="InterPro" id="IPR002328">
    <property type="entry name" value="ADH_Zn_CS"/>
</dbReference>
<dbReference type="InterPro" id="IPR011032">
    <property type="entry name" value="GroES-like_sf"/>
</dbReference>
<dbReference type="InterPro" id="IPR036291">
    <property type="entry name" value="NAD(P)-bd_dom_sf"/>
</dbReference>
<dbReference type="InterPro" id="IPR020843">
    <property type="entry name" value="PKS_ER"/>
</dbReference>
<dbReference type="InterPro" id="IPR050129">
    <property type="entry name" value="Zn_alcohol_dh"/>
</dbReference>
<dbReference type="PANTHER" id="PTHR43401">
    <property type="entry name" value="L-THREONINE 3-DEHYDROGENASE"/>
    <property type="match status" value="1"/>
</dbReference>
<dbReference type="PANTHER" id="PTHR43401:SF2">
    <property type="entry name" value="L-THREONINE 3-DEHYDROGENASE"/>
    <property type="match status" value="1"/>
</dbReference>
<dbReference type="Pfam" id="PF08240">
    <property type="entry name" value="ADH_N"/>
    <property type="match status" value="1"/>
</dbReference>
<dbReference type="Pfam" id="PF00107">
    <property type="entry name" value="ADH_zinc_N"/>
    <property type="match status" value="1"/>
</dbReference>
<dbReference type="SMART" id="SM00829">
    <property type="entry name" value="PKS_ER"/>
    <property type="match status" value="1"/>
</dbReference>
<dbReference type="SUPFAM" id="SSF50129">
    <property type="entry name" value="GroES-like"/>
    <property type="match status" value="1"/>
</dbReference>
<dbReference type="SUPFAM" id="SSF51735">
    <property type="entry name" value="NAD(P)-binding Rossmann-fold domains"/>
    <property type="match status" value="1"/>
</dbReference>
<dbReference type="PROSITE" id="PS00059">
    <property type="entry name" value="ADH_ZINC"/>
    <property type="match status" value="1"/>
</dbReference>
<evidence type="ECO:0000250" key="1">
    <source>
        <dbReference type="UniProtKB" id="O58389"/>
    </source>
</evidence>
<evidence type="ECO:0000269" key="2">
    <source ref="2"/>
</evidence>
<evidence type="ECO:0000303" key="3">
    <source ref="2"/>
</evidence>
<evidence type="ECO:0000305" key="4"/>
<evidence type="ECO:0000312" key="5">
    <source>
        <dbReference type="EMBL" id="ABG41067.1"/>
    </source>
</evidence>
<accession>Q15SS1</accession>
<organism>
    <name type="scientific">Pseudoalteromonas atlantica (strain T6c / ATCC BAA-1087)</name>
    <dbReference type="NCBI Taxonomy" id="3042615"/>
    <lineage>
        <taxon>Bacteria</taxon>
        <taxon>Pseudomonadati</taxon>
        <taxon>Pseudomonadota</taxon>
        <taxon>Gammaproteobacteria</taxon>
        <taxon>Alteromonadales</taxon>
        <taxon>Alteromonadaceae</taxon>
        <taxon>Paraglaciecola</taxon>
    </lineage>
</organism>
<reference key="1">
    <citation type="submission" date="2006-06" db="EMBL/GenBank/DDBJ databases">
        <title>Complete sequence of Pseudoalteromonas atlantica T6c.</title>
        <authorList>
            <consortium name="US DOE Joint Genome Institute"/>
            <person name="Copeland A."/>
            <person name="Lucas S."/>
            <person name="Lapidus A."/>
            <person name="Barry K."/>
            <person name="Detter J.C."/>
            <person name="Glavina del Rio T."/>
            <person name="Hammon N."/>
            <person name="Israni S."/>
            <person name="Dalin E."/>
            <person name="Tice H."/>
            <person name="Pitluck S."/>
            <person name="Saunders E."/>
            <person name="Brettin T."/>
            <person name="Bruce D."/>
            <person name="Han C."/>
            <person name="Tapia R."/>
            <person name="Gilna P."/>
            <person name="Schmutz J."/>
            <person name="Larimer F."/>
            <person name="Land M."/>
            <person name="Hauser L."/>
            <person name="Kyrpides N."/>
            <person name="Kim E."/>
            <person name="Karls A.C."/>
            <person name="Bartlett D."/>
            <person name="Higgins B.P."/>
            <person name="Richardson P."/>
        </authorList>
    </citation>
    <scope>NUCLEOTIDE SEQUENCE [LARGE SCALE GENOMIC DNA]</scope>
    <source>
        <strain>T6c / ATCC BAA-1087</strain>
    </source>
</reference>
<reference key="2">
    <citation type="journal article" date="2014" name="Biotechnol. Bioprocess Eng.">
        <title>Metabolic pathway of 3,6-anhydro-L-galactose in agar-degrading microorganisms.</title>
        <authorList>
            <person name="Lee S.B."/>
            <person name="Cho S.J."/>
            <person name="Kim J.A."/>
            <person name="Lee S.Y."/>
            <person name="Kim S.M."/>
            <person name="Lim H.S."/>
        </authorList>
    </citation>
    <scope>FUNCTION</scope>
    <scope>CATALYTIC ACTIVITY</scope>
    <source>
        <strain>T6c / ATCC BAA-1087</strain>
    </source>
</reference>
<protein>
    <recommendedName>
        <fullName evidence="4">2-dehydro-3-deoxy-L-galactonate 5-dehydrogenase</fullName>
        <ecNumber evidence="2">1.1.1.389</ecNumber>
    </recommendedName>
    <alternativeName>
        <fullName evidence="3">2-keto-3-deoxy-L-galactonate 5-dehydrogenase</fullName>
    </alternativeName>
</protein>
<keyword id="KW-0119">Carbohydrate metabolism</keyword>
<keyword id="KW-0479">Metal-binding</keyword>
<keyword id="KW-0520">NAD</keyword>
<keyword id="KW-0560">Oxidoreductase</keyword>
<keyword id="KW-0862">Zinc</keyword>
<feature type="chain" id="PRO_0000449954" description="2-dehydro-3-deoxy-L-galactonate 5-dehydrogenase">
    <location>
        <begin position="1"/>
        <end position="341"/>
    </location>
</feature>
<feature type="active site" description="Charge relay system" evidence="1">
    <location>
        <position position="39"/>
    </location>
</feature>
<feature type="active site" description="Charge relay system" evidence="1">
    <location>
        <position position="42"/>
    </location>
</feature>
<feature type="binding site" evidence="1">
    <location>
        <position position="37"/>
    </location>
    <ligand>
        <name>Zn(2+)</name>
        <dbReference type="ChEBI" id="CHEBI:29105"/>
        <label>1</label>
        <note>catalytic</note>
    </ligand>
</feature>
<feature type="binding site" evidence="1">
    <location>
        <position position="60"/>
    </location>
    <ligand>
        <name>Zn(2+)</name>
        <dbReference type="ChEBI" id="CHEBI:29105"/>
        <label>1</label>
        <note>catalytic</note>
    </ligand>
</feature>
<feature type="binding site" evidence="1">
    <location>
        <position position="61"/>
    </location>
    <ligand>
        <name>Zn(2+)</name>
        <dbReference type="ChEBI" id="CHEBI:29105"/>
        <label>1</label>
        <note>catalytic</note>
    </ligand>
</feature>
<feature type="binding site" evidence="1">
    <location>
        <position position="90"/>
    </location>
    <ligand>
        <name>Zn(2+)</name>
        <dbReference type="ChEBI" id="CHEBI:29105"/>
        <label>2</label>
    </ligand>
</feature>
<feature type="binding site" evidence="1">
    <location>
        <position position="93"/>
    </location>
    <ligand>
        <name>Zn(2+)</name>
        <dbReference type="ChEBI" id="CHEBI:29105"/>
        <label>2</label>
    </ligand>
</feature>
<feature type="binding site" evidence="1">
    <location>
        <position position="96"/>
    </location>
    <ligand>
        <name>Zn(2+)</name>
        <dbReference type="ChEBI" id="CHEBI:29105"/>
        <label>2</label>
    </ligand>
</feature>
<feature type="binding site" evidence="1">
    <location>
        <position position="104"/>
    </location>
    <ligand>
        <name>Zn(2+)</name>
        <dbReference type="ChEBI" id="CHEBI:29105"/>
        <label>2</label>
    </ligand>
</feature>
<feature type="site" description="Important for catalytic activity for the proton relay mechanism but does not participate directly in the coordination of zinc atom" evidence="1">
    <location>
        <position position="145"/>
    </location>
</feature>
<sequence>MFAAQYIGNKSFNVVEGHAIAPQAGEVRLDVGYVGICGTDMHIYHGVMDQRVSIPQTIGHEISGVVAQIGEGVEGFTVGEKVVVRPLDWCGECPTCEAGLTHICQNLKFMGIDTPGAFQSSWTVKARTLHKLPAGVDLKQGALVEPLSVACHDVRRSRLKAGEKAVILGGGPIGQLVAAVAKSVGAEVLVSEPNDSRREFADELGVKSVNPMDTDLAAYVDQWTGTKGADVVFEVSGVLPAIQSMTQIAGRRGRIVMVAIHSTAPPIDLFQFFWKELELLGARVYEAADFDWAIELIASGQIDLKPFISSVSPLADIGSAFANMDGNPQGMKALVECNAEQ</sequence>
<proteinExistence type="evidence at protein level"/>